<sequence>MAELNTHVNVKEKIYAVRSVVPNKSNNEIVLVLQQFDFNVDKAVQAFVDGSAIQVLKEWNMTGKKKNNKRKRSKSKQHQGNKDAKDKVERPEAGPLQPQPPQIQNGPMNGCEKDSSSTDSANEKPALIPREKKISILEEPSKALRGVTEGNRLLQQKLSLDGNPKPIHGTTERSDGLQWSAEQPCNPSKPKAKTSPVKSNTPAAHLEIKPDELAKKRGPNIEKSVKDLQRCTVSLTRYRVMIKEEVDSSVKKIKAAFAELHNCIIDKEVSLMAEMDKVKEEAMEILTARQKKAEELKRLTDLASQMAEMQLAELRAEIKHFVSERKYDEELGKAARFSCDIEQLKAQIMLCGEITHPKNNYSSRTPCSSLLPLLNAHAATSGKQSNFSRKSSTHNKPSEGKAANPKMVSSLPSTADPSHQTMPANKQNGSSNQRRRFNPQYHNNRLNGPAKSQGSGNEAEPLGKGNSRHEHRRQPHNGFRPKNKGGAKNQEASLGMKTPEAPAHSEKPRRRQHAADTSEARPFRGSVGRVSQCNLCPTRIEVSTDAAVLSVPAVTLVA</sequence>
<feature type="initiator methionine" description="Removed" evidence="8">
    <location>
        <position position="1"/>
    </location>
</feature>
<feature type="chain" id="PRO_0000307699" description="SPATS2-like protein">
    <location>
        <begin position="2"/>
        <end position="558"/>
    </location>
</feature>
<feature type="region of interest" description="Disordered" evidence="2">
    <location>
        <begin position="63"/>
        <end position="134"/>
    </location>
</feature>
<feature type="region of interest" description="Disordered" evidence="2">
    <location>
        <begin position="157"/>
        <end position="201"/>
    </location>
</feature>
<feature type="region of interest" description="Disordered" evidence="2">
    <location>
        <begin position="380"/>
        <end position="525"/>
    </location>
</feature>
<feature type="coiled-coil region" evidence="1">
    <location>
        <begin position="271"/>
        <end position="344"/>
    </location>
</feature>
<feature type="compositionally biased region" description="Basic residues" evidence="2">
    <location>
        <begin position="63"/>
        <end position="79"/>
    </location>
</feature>
<feature type="compositionally biased region" description="Basic and acidic residues" evidence="2">
    <location>
        <begin position="80"/>
        <end position="92"/>
    </location>
</feature>
<feature type="compositionally biased region" description="Polar residues" evidence="2">
    <location>
        <begin position="381"/>
        <end position="390"/>
    </location>
</feature>
<feature type="compositionally biased region" description="Polar residues" evidence="2">
    <location>
        <begin position="410"/>
        <end position="432"/>
    </location>
</feature>
<feature type="compositionally biased region" description="Polar residues" evidence="2">
    <location>
        <begin position="440"/>
        <end position="456"/>
    </location>
</feature>
<feature type="compositionally biased region" description="Basic residues" evidence="2">
    <location>
        <begin position="469"/>
        <end position="485"/>
    </location>
</feature>
<feature type="compositionally biased region" description="Basic and acidic residues" evidence="2">
    <location>
        <begin position="513"/>
        <end position="522"/>
    </location>
</feature>
<feature type="modified residue" description="N-acetylalanine" evidence="8">
    <location>
        <position position="2"/>
    </location>
</feature>
<feature type="modified residue" description="Phosphoserine" evidence="7 9 10">
    <location>
        <position position="120"/>
    </location>
</feature>
<feature type="modified residue" description="Phosphoserine" evidence="9">
    <location>
        <position position="455"/>
    </location>
</feature>
<feature type="splice variant" id="VSP_054241" description="In isoform 3." evidence="4">
    <original>M</original>
    <variation>MDPFCHSSSETRLLSGTLLWIPRAYSTRSKM</variation>
    <location>
        <position position="1"/>
    </location>
</feature>
<feature type="splice variant" id="VSP_054242" description="In isoform 4." evidence="4">
    <original>M</original>
    <variation>MAYSTRSKM</variation>
    <location>
        <position position="1"/>
    </location>
</feature>
<feature type="splice variant" id="VSP_028792" description="In isoform 2." evidence="5">
    <location>
        <begin position="149"/>
        <end position="217"/>
    </location>
</feature>
<feature type="sequence conflict" description="In Ref. 7; AAH18736." evidence="6" ref="7">
    <location>
        <position position="64"/>
    </location>
</feature>
<feature type="sequence conflict" description="In Ref. 3; BAA92065." evidence="6" ref="3">
    <original>A</original>
    <variation>T</variation>
    <location>
        <position position="255"/>
    </location>
</feature>
<feature type="sequence conflict" description="In Ref. 1; AAR21087 and 2; CAB53658." evidence="6" ref="1 2">
    <original>D</original>
    <variation>N</variation>
    <location>
        <position position="301"/>
    </location>
</feature>
<dbReference type="EMBL" id="AY450394">
    <property type="protein sequence ID" value="AAR21087.1"/>
    <property type="molecule type" value="mRNA"/>
</dbReference>
<dbReference type="EMBL" id="AL110124">
    <property type="protein sequence ID" value="CAB53658.2"/>
    <property type="molecule type" value="mRNA"/>
</dbReference>
<dbReference type="EMBL" id="AK002064">
    <property type="protein sequence ID" value="BAA92065.1"/>
    <property type="molecule type" value="mRNA"/>
</dbReference>
<dbReference type="EMBL" id="AK290496">
    <property type="protein sequence ID" value="BAF83185.1"/>
    <property type="molecule type" value="mRNA"/>
</dbReference>
<dbReference type="EMBL" id="AK299223">
    <property type="protein sequence ID" value="BAG61258.1"/>
    <property type="molecule type" value="mRNA"/>
</dbReference>
<dbReference type="EMBL" id="AK300075">
    <property type="protein sequence ID" value="BAG61879.1"/>
    <property type="molecule type" value="mRNA"/>
</dbReference>
<dbReference type="EMBL" id="AF193059">
    <property type="protein sequence ID" value="AAG22487.1"/>
    <property type="status" value="ALT_FRAME"/>
    <property type="molecule type" value="mRNA"/>
</dbReference>
<dbReference type="EMBL" id="AC074213">
    <property type="status" value="NOT_ANNOTATED_CDS"/>
    <property type="molecule type" value="Genomic_DNA"/>
</dbReference>
<dbReference type="EMBL" id="AC012459">
    <property type="protein sequence ID" value="AAY24307.1"/>
    <property type="molecule type" value="Genomic_DNA"/>
</dbReference>
<dbReference type="EMBL" id="AC105381">
    <property type="status" value="NOT_ANNOTATED_CDS"/>
    <property type="molecule type" value="Genomic_DNA"/>
</dbReference>
<dbReference type="EMBL" id="CH471063">
    <property type="protein sequence ID" value="EAW70197.1"/>
    <property type="molecule type" value="Genomic_DNA"/>
</dbReference>
<dbReference type="EMBL" id="BC018736">
    <property type="protein sequence ID" value="AAH18736.1"/>
    <property type="molecule type" value="mRNA"/>
</dbReference>
<dbReference type="CCDS" id="CCDS46483.1">
    <molecule id="Q9NUQ6-1"/>
</dbReference>
<dbReference type="CCDS" id="CCDS46484.1">
    <molecule id="Q9NUQ6-2"/>
</dbReference>
<dbReference type="CCDS" id="CCDS74621.1">
    <molecule id="Q9NUQ6-3"/>
</dbReference>
<dbReference type="PIR" id="T14738">
    <property type="entry name" value="T14738"/>
</dbReference>
<dbReference type="RefSeq" id="NP_001093892.1">
    <molecule id="Q9NUQ6-1"/>
    <property type="nucleotide sequence ID" value="NM_001100422.1"/>
</dbReference>
<dbReference type="RefSeq" id="NP_001093893.1">
    <molecule id="Q9NUQ6-1"/>
    <property type="nucleotide sequence ID" value="NM_001100423.2"/>
</dbReference>
<dbReference type="RefSeq" id="NP_001093894.1">
    <molecule id="Q9NUQ6-2"/>
    <property type="nucleotide sequence ID" value="NM_001100424.1"/>
</dbReference>
<dbReference type="RefSeq" id="NP_001269664.1">
    <molecule id="Q9NUQ6-1"/>
    <property type="nucleotide sequence ID" value="NM_001282735.1"/>
</dbReference>
<dbReference type="RefSeq" id="NP_001269672.1">
    <property type="nucleotide sequence ID" value="NM_001282743.1"/>
</dbReference>
<dbReference type="RefSeq" id="NP_001269673.1">
    <molecule id="Q9NUQ6-3"/>
    <property type="nucleotide sequence ID" value="NM_001282744.2"/>
</dbReference>
<dbReference type="RefSeq" id="NP_056350.2">
    <molecule id="Q9NUQ6-1"/>
    <property type="nucleotide sequence ID" value="NM_015535.3"/>
</dbReference>
<dbReference type="RefSeq" id="XP_005246513.1">
    <property type="nucleotide sequence ID" value="XM_005246456.1"/>
</dbReference>
<dbReference type="RefSeq" id="XP_005246514.1">
    <property type="nucleotide sequence ID" value="XM_005246457.1"/>
</dbReference>
<dbReference type="RefSeq" id="XP_005246515.1">
    <molecule id="Q9NUQ6-1"/>
    <property type="nucleotide sequence ID" value="XM_005246458.3"/>
</dbReference>
<dbReference type="RefSeq" id="XP_005246516.1">
    <molecule id="Q9NUQ6-2"/>
    <property type="nucleotide sequence ID" value="XM_005246459.2"/>
</dbReference>
<dbReference type="RefSeq" id="XP_011509240.1">
    <molecule id="Q9NUQ6-3"/>
    <property type="nucleotide sequence ID" value="XM_011510938.2"/>
</dbReference>
<dbReference type="RefSeq" id="XP_011509241.1">
    <property type="nucleotide sequence ID" value="XM_011510939.1"/>
</dbReference>
<dbReference type="RefSeq" id="XP_016859272.1">
    <property type="nucleotide sequence ID" value="XM_017003783.1"/>
</dbReference>
<dbReference type="RefSeq" id="XP_016859274.1">
    <property type="nucleotide sequence ID" value="XM_017003785.1"/>
</dbReference>
<dbReference type="RefSeq" id="XP_016859275.1">
    <property type="nucleotide sequence ID" value="XM_017003786.1"/>
</dbReference>
<dbReference type="RefSeq" id="XP_016859276.1">
    <property type="nucleotide sequence ID" value="XM_017003787.1"/>
</dbReference>
<dbReference type="RefSeq" id="XP_024308556.1">
    <molecule id="Q9NUQ6-2"/>
    <property type="nucleotide sequence ID" value="XM_024452788.2"/>
</dbReference>
<dbReference type="RefSeq" id="XP_047299848.1">
    <molecule id="Q9NUQ6-3"/>
    <property type="nucleotide sequence ID" value="XM_047443892.1"/>
</dbReference>
<dbReference type="RefSeq" id="XP_047299850.1">
    <molecule id="Q9NUQ6-1"/>
    <property type="nucleotide sequence ID" value="XM_047443894.1"/>
</dbReference>
<dbReference type="RefSeq" id="XP_047299851.1">
    <molecule id="Q9NUQ6-2"/>
    <property type="nucleotide sequence ID" value="XM_047443895.1"/>
</dbReference>
<dbReference type="SMR" id="Q9NUQ6"/>
<dbReference type="BioGRID" id="117483">
    <property type="interactions" value="173"/>
</dbReference>
<dbReference type="FunCoup" id="Q9NUQ6">
    <property type="interactions" value="803"/>
</dbReference>
<dbReference type="IntAct" id="Q9NUQ6">
    <property type="interactions" value="93"/>
</dbReference>
<dbReference type="MINT" id="Q9NUQ6"/>
<dbReference type="STRING" id="9606.ENSP00000482515"/>
<dbReference type="GlyGen" id="Q9NUQ6">
    <property type="glycosylation" value="1 site, 1 O-linked glycan (1 site)"/>
</dbReference>
<dbReference type="iPTMnet" id="Q9NUQ6"/>
<dbReference type="PhosphoSitePlus" id="Q9NUQ6"/>
<dbReference type="BioMuta" id="SPATS2L"/>
<dbReference type="DMDM" id="160185484"/>
<dbReference type="jPOST" id="Q9NUQ6"/>
<dbReference type="MassIVE" id="Q9NUQ6"/>
<dbReference type="PaxDb" id="9606-ENSP00000482515"/>
<dbReference type="PeptideAtlas" id="Q9NUQ6"/>
<dbReference type="ProteomicsDB" id="5078"/>
<dbReference type="ProteomicsDB" id="82709">
    <molecule id="Q9NUQ6-1"/>
</dbReference>
<dbReference type="ProteomicsDB" id="82710">
    <molecule id="Q9NUQ6-2"/>
</dbReference>
<dbReference type="Pumba" id="Q9NUQ6"/>
<dbReference type="Antibodypedia" id="34086">
    <property type="antibodies" value="144 antibodies from 19 providers"/>
</dbReference>
<dbReference type="DNASU" id="26010"/>
<dbReference type="Ensembl" id="ENST00000358677.9">
    <molecule id="Q9NUQ6-1"/>
    <property type="protein sequence ID" value="ENSP00000351503.4"/>
    <property type="gene ID" value="ENSG00000196141.14"/>
</dbReference>
<dbReference type="Ensembl" id="ENST00000360760.9">
    <molecule id="Q9NUQ6-2"/>
    <property type="protein sequence ID" value="ENSP00000353989.5"/>
    <property type="gene ID" value="ENSG00000196141.14"/>
</dbReference>
<dbReference type="Ensembl" id="ENST00000409140.8">
    <molecule id="Q9NUQ6-1"/>
    <property type="protein sequence ID" value="ENSP00000386730.3"/>
    <property type="gene ID" value="ENSG00000196141.14"/>
</dbReference>
<dbReference type="Ensembl" id="ENST00000409151.5">
    <molecule id="Q9NUQ6-4"/>
    <property type="protein sequence ID" value="ENSP00000386310.1"/>
    <property type="gene ID" value="ENSG00000196141.14"/>
</dbReference>
<dbReference type="Ensembl" id="ENST00000409718.5">
    <molecule id="Q9NUQ6-1"/>
    <property type="protein sequence ID" value="ENSP00000386336.1"/>
    <property type="gene ID" value="ENSG00000196141.14"/>
</dbReference>
<dbReference type="Ensembl" id="ENST00000409988.7">
    <molecule id="Q9NUQ6-1"/>
    <property type="protein sequence ID" value="ENSP00000386931.3"/>
    <property type="gene ID" value="ENSG00000196141.14"/>
</dbReference>
<dbReference type="Ensembl" id="ENST00000451764.6">
    <molecule id="Q9NUQ6-1"/>
    <property type="protein sequence ID" value="ENSP00000391467.2"/>
    <property type="gene ID" value="ENSG00000196141.14"/>
</dbReference>
<dbReference type="Ensembl" id="ENST00000619961.4">
    <molecule id="Q9NUQ6-3"/>
    <property type="protein sequence ID" value="ENSP00000482515.1"/>
    <property type="gene ID" value="ENSG00000196141.14"/>
</dbReference>
<dbReference type="GeneID" id="26010"/>
<dbReference type="KEGG" id="hsa:26010"/>
<dbReference type="MANE-Select" id="ENST00000409140.8">
    <property type="protein sequence ID" value="ENSP00000386730.3"/>
    <property type="RefSeq nucleotide sequence ID" value="NM_001100423.2"/>
    <property type="RefSeq protein sequence ID" value="NP_001093893.1"/>
</dbReference>
<dbReference type="UCSC" id="uc002uvn.5">
    <molecule id="Q9NUQ6-1"/>
    <property type="organism name" value="human"/>
</dbReference>
<dbReference type="AGR" id="HGNC:24574"/>
<dbReference type="CTD" id="26010"/>
<dbReference type="DisGeNET" id="26010"/>
<dbReference type="GeneCards" id="SPATS2L"/>
<dbReference type="HGNC" id="HGNC:24574">
    <property type="gene designation" value="SPATS2L"/>
</dbReference>
<dbReference type="HPA" id="ENSG00000196141">
    <property type="expression patterns" value="Low tissue specificity"/>
</dbReference>
<dbReference type="MIM" id="613817">
    <property type="type" value="gene"/>
</dbReference>
<dbReference type="neXtProt" id="NX_Q9NUQ6"/>
<dbReference type="OpenTargets" id="ENSG00000196141"/>
<dbReference type="PharmGKB" id="PA165697465"/>
<dbReference type="VEuPathDB" id="HostDB:ENSG00000196141"/>
<dbReference type="eggNOG" id="ENOG502S51R">
    <property type="taxonomic scope" value="Eukaryota"/>
</dbReference>
<dbReference type="GeneTree" id="ENSGT00390000001138"/>
<dbReference type="HOGENOM" id="CLU_037089_3_0_1"/>
<dbReference type="InParanoid" id="Q9NUQ6"/>
<dbReference type="OrthoDB" id="6136201at2759"/>
<dbReference type="PAN-GO" id="Q9NUQ6">
    <property type="GO annotations" value="1 GO annotation based on evolutionary models"/>
</dbReference>
<dbReference type="PhylomeDB" id="Q9NUQ6"/>
<dbReference type="TreeFam" id="TF320553"/>
<dbReference type="PathwayCommons" id="Q9NUQ6"/>
<dbReference type="SignaLink" id="Q9NUQ6"/>
<dbReference type="BioGRID-ORCS" id="26010">
    <property type="hits" value="11 hits in 1155 CRISPR screens"/>
</dbReference>
<dbReference type="CD-CODE" id="91857CE7">
    <property type="entry name" value="Nucleolus"/>
</dbReference>
<dbReference type="CD-CODE" id="DEE660B4">
    <property type="entry name" value="Stress granule"/>
</dbReference>
<dbReference type="ChiTaRS" id="SPATS2L">
    <property type="organism name" value="human"/>
</dbReference>
<dbReference type="GeneWiki" id="SPATS2L"/>
<dbReference type="GenomeRNAi" id="26010"/>
<dbReference type="Pharos" id="Q9NUQ6">
    <property type="development level" value="Tbio"/>
</dbReference>
<dbReference type="PRO" id="PR:Q9NUQ6"/>
<dbReference type="Proteomes" id="UP000005640">
    <property type="component" value="Chromosome 2"/>
</dbReference>
<dbReference type="RNAct" id="Q9NUQ6">
    <property type="molecule type" value="protein"/>
</dbReference>
<dbReference type="Bgee" id="ENSG00000196141">
    <property type="expression patterns" value="Expressed in pancreatic ductal cell and 200 other cell types or tissues"/>
</dbReference>
<dbReference type="ExpressionAtlas" id="Q9NUQ6">
    <property type="expression patterns" value="baseline and differential"/>
</dbReference>
<dbReference type="GO" id="GO:0005737">
    <property type="term" value="C:cytoplasm"/>
    <property type="evidence" value="ECO:0000318"/>
    <property type="project" value="GO_Central"/>
</dbReference>
<dbReference type="GO" id="GO:0005829">
    <property type="term" value="C:cytosol"/>
    <property type="evidence" value="ECO:0000314"/>
    <property type="project" value="HPA"/>
</dbReference>
<dbReference type="GO" id="GO:0005730">
    <property type="term" value="C:nucleolus"/>
    <property type="evidence" value="ECO:0000314"/>
    <property type="project" value="HPA"/>
</dbReference>
<dbReference type="GO" id="GO:0005654">
    <property type="term" value="C:nucleoplasm"/>
    <property type="evidence" value="ECO:0000314"/>
    <property type="project" value="HPA"/>
</dbReference>
<dbReference type="GO" id="GO:0032991">
    <property type="term" value="C:protein-containing complex"/>
    <property type="evidence" value="ECO:0000314"/>
    <property type="project" value="LIFEdb"/>
</dbReference>
<dbReference type="GO" id="GO:0003723">
    <property type="term" value="F:RNA binding"/>
    <property type="evidence" value="ECO:0007005"/>
    <property type="project" value="UniProtKB"/>
</dbReference>
<dbReference type="InterPro" id="IPR009816">
    <property type="entry name" value="SPATS2-like"/>
</dbReference>
<dbReference type="InterPro" id="IPR009060">
    <property type="entry name" value="UBA-like_sf"/>
</dbReference>
<dbReference type="PANTHER" id="PTHR15623:SF8">
    <property type="entry name" value="SPATS2-LIKE PROTEIN"/>
    <property type="match status" value="1"/>
</dbReference>
<dbReference type="PANTHER" id="PTHR15623">
    <property type="entry name" value="SPERMATOGENESIS-ASSOCIATED SERINE-RICH PROTEIN 2-RELATED"/>
    <property type="match status" value="1"/>
</dbReference>
<dbReference type="Pfam" id="PF07139">
    <property type="entry name" value="SPATS2-like"/>
    <property type="match status" value="1"/>
</dbReference>
<dbReference type="SUPFAM" id="SSF46934">
    <property type="entry name" value="UBA-like"/>
    <property type="match status" value="1"/>
</dbReference>
<organism>
    <name type="scientific">Homo sapiens</name>
    <name type="common">Human</name>
    <dbReference type="NCBI Taxonomy" id="9606"/>
    <lineage>
        <taxon>Eukaryota</taxon>
        <taxon>Metazoa</taxon>
        <taxon>Chordata</taxon>
        <taxon>Craniata</taxon>
        <taxon>Vertebrata</taxon>
        <taxon>Euteleostomi</taxon>
        <taxon>Mammalia</taxon>
        <taxon>Eutheria</taxon>
        <taxon>Euarchontoglires</taxon>
        <taxon>Primates</taxon>
        <taxon>Haplorrhini</taxon>
        <taxon>Catarrhini</taxon>
        <taxon>Hominidae</taxon>
        <taxon>Homo</taxon>
    </lineage>
</organism>
<evidence type="ECO:0000255" key="1"/>
<evidence type="ECO:0000256" key="2">
    <source>
        <dbReference type="SAM" id="MobiDB-lite"/>
    </source>
</evidence>
<evidence type="ECO:0000269" key="3">
    <source>
    </source>
</evidence>
<evidence type="ECO:0000303" key="4">
    <source>
    </source>
</evidence>
<evidence type="ECO:0000303" key="5">
    <source>
    </source>
</evidence>
<evidence type="ECO:0000305" key="6"/>
<evidence type="ECO:0007744" key="7">
    <source>
    </source>
</evidence>
<evidence type="ECO:0007744" key="8">
    <source>
    </source>
</evidence>
<evidence type="ECO:0007744" key="9">
    <source>
    </source>
</evidence>
<evidence type="ECO:0007744" key="10">
    <source>
    </source>
</evidence>
<comment type="subcellular location">
    <subcellularLocation>
        <location evidence="3">Cytoplasm</location>
    </subcellularLocation>
    <subcellularLocation>
        <location evidence="3">Nucleus</location>
        <location evidence="3">Nucleolus</location>
    </subcellularLocation>
    <text>During oxidative stress as well as UV irradiation, energy deprivation or heat shock, relocalizes to cytoplasmic stress granules. In the nucleus, found in structures lacking NPM1.</text>
</comment>
<comment type="alternative products">
    <event type="alternative splicing"/>
    <isoform>
        <id>Q9NUQ6-1</id>
        <name>1</name>
        <sequence type="displayed"/>
    </isoform>
    <isoform>
        <id>Q9NUQ6-2</id>
        <name>2</name>
        <sequence type="described" ref="VSP_028792"/>
    </isoform>
    <isoform>
        <id>Q9NUQ6-3</id>
        <name>3</name>
        <sequence type="described" ref="VSP_054241"/>
    </isoform>
    <isoform>
        <id>Q9NUQ6-4</id>
        <name>4</name>
        <sequence type="described" ref="VSP_054242"/>
    </isoform>
</comment>
<comment type="similarity">
    <text evidence="6">Belongs to the SPATS2 family.</text>
</comment>
<comment type="sequence caution" evidence="6">
    <conflict type="frameshift">
        <sequence resource="EMBL-CDS" id="AAG22487"/>
    </conflict>
</comment>
<reference key="1">
    <citation type="submission" date="2003-10" db="EMBL/GenBank/DDBJ databases">
        <title>Screening and cloning of the target genes transactivated by hepatitis B virus DNA polymerase using suppression subtractive hybridization (SSH) technique.</title>
        <authorList>
            <person name="Wang C."/>
            <person name="Cheng J."/>
            <person name="Lang Z."/>
            <person name="Ji D."/>
            <person name="Yang Y."/>
            <person name="Zhang L."/>
            <person name="Wu Y."/>
        </authorList>
    </citation>
    <scope>NUCLEOTIDE SEQUENCE [MRNA] (ISOFORM 1)</scope>
</reference>
<reference key="2">
    <citation type="journal article" date="2001" name="Genome Res.">
        <title>Towards a catalog of human genes and proteins: sequencing and analysis of 500 novel complete protein coding human cDNAs.</title>
        <authorList>
            <person name="Wiemann S."/>
            <person name="Weil B."/>
            <person name="Wellenreuther R."/>
            <person name="Gassenhuber J."/>
            <person name="Glassl S."/>
            <person name="Ansorge W."/>
            <person name="Boecher M."/>
            <person name="Bloecker H."/>
            <person name="Bauersachs S."/>
            <person name="Blum H."/>
            <person name="Lauber J."/>
            <person name="Duesterhoeft A."/>
            <person name="Beyer A."/>
            <person name="Koehrer K."/>
            <person name="Strack N."/>
            <person name="Mewes H.-W."/>
            <person name="Ottenwaelder B."/>
            <person name="Obermaier B."/>
            <person name="Tampe J."/>
            <person name="Heubner D."/>
            <person name="Wambutt R."/>
            <person name="Korn B."/>
            <person name="Klein M."/>
            <person name="Poustka A."/>
        </authorList>
    </citation>
    <scope>NUCLEOTIDE SEQUENCE [LARGE SCALE MRNA] (ISOFORM 1)</scope>
    <source>
        <tissue>Brain</tissue>
    </source>
</reference>
<reference key="3">
    <citation type="journal article" date="2004" name="Nat. Genet.">
        <title>Complete sequencing and characterization of 21,243 full-length human cDNAs.</title>
        <authorList>
            <person name="Ota T."/>
            <person name="Suzuki Y."/>
            <person name="Nishikawa T."/>
            <person name="Otsuki T."/>
            <person name="Sugiyama T."/>
            <person name="Irie R."/>
            <person name="Wakamatsu A."/>
            <person name="Hayashi K."/>
            <person name="Sato H."/>
            <person name="Nagai K."/>
            <person name="Kimura K."/>
            <person name="Makita H."/>
            <person name="Sekine M."/>
            <person name="Obayashi M."/>
            <person name="Nishi T."/>
            <person name="Shibahara T."/>
            <person name="Tanaka T."/>
            <person name="Ishii S."/>
            <person name="Yamamoto J."/>
            <person name="Saito K."/>
            <person name="Kawai Y."/>
            <person name="Isono Y."/>
            <person name="Nakamura Y."/>
            <person name="Nagahari K."/>
            <person name="Murakami K."/>
            <person name="Yasuda T."/>
            <person name="Iwayanagi T."/>
            <person name="Wagatsuma M."/>
            <person name="Shiratori A."/>
            <person name="Sudo H."/>
            <person name="Hosoiri T."/>
            <person name="Kaku Y."/>
            <person name="Kodaira H."/>
            <person name="Kondo H."/>
            <person name="Sugawara M."/>
            <person name="Takahashi M."/>
            <person name="Kanda K."/>
            <person name="Yokoi T."/>
            <person name="Furuya T."/>
            <person name="Kikkawa E."/>
            <person name="Omura Y."/>
            <person name="Abe K."/>
            <person name="Kamihara K."/>
            <person name="Katsuta N."/>
            <person name="Sato K."/>
            <person name="Tanikawa M."/>
            <person name="Yamazaki M."/>
            <person name="Ninomiya K."/>
            <person name="Ishibashi T."/>
            <person name="Yamashita H."/>
            <person name="Murakawa K."/>
            <person name="Fujimori K."/>
            <person name="Tanai H."/>
            <person name="Kimata M."/>
            <person name="Watanabe M."/>
            <person name="Hiraoka S."/>
            <person name="Chiba Y."/>
            <person name="Ishida S."/>
            <person name="Ono Y."/>
            <person name="Takiguchi S."/>
            <person name="Watanabe S."/>
            <person name="Yosida M."/>
            <person name="Hotuta T."/>
            <person name="Kusano J."/>
            <person name="Kanehori K."/>
            <person name="Takahashi-Fujii A."/>
            <person name="Hara H."/>
            <person name="Tanase T.-O."/>
            <person name="Nomura Y."/>
            <person name="Togiya S."/>
            <person name="Komai F."/>
            <person name="Hara R."/>
            <person name="Takeuchi K."/>
            <person name="Arita M."/>
            <person name="Imose N."/>
            <person name="Musashino K."/>
            <person name="Yuuki H."/>
            <person name="Oshima A."/>
            <person name="Sasaki N."/>
            <person name="Aotsuka S."/>
            <person name="Yoshikawa Y."/>
            <person name="Matsunawa H."/>
            <person name="Ichihara T."/>
            <person name="Shiohata N."/>
            <person name="Sano S."/>
            <person name="Moriya S."/>
            <person name="Momiyama H."/>
            <person name="Satoh N."/>
            <person name="Takami S."/>
            <person name="Terashima Y."/>
            <person name="Suzuki O."/>
            <person name="Nakagawa S."/>
            <person name="Senoh A."/>
            <person name="Mizoguchi H."/>
            <person name="Goto Y."/>
            <person name="Shimizu F."/>
            <person name="Wakebe H."/>
            <person name="Hishigaki H."/>
            <person name="Watanabe T."/>
            <person name="Sugiyama A."/>
            <person name="Takemoto M."/>
            <person name="Kawakami B."/>
            <person name="Yamazaki M."/>
            <person name="Watanabe K."/>
            <person name="Kumagai A."/>
            <person name="Itakura S."/>
            <person name="Fukuzumi Y."/>
            <person name="Fujimori Y."/>
            <person name="Komiyama M."/>
            <person name="Tashiro H."/>
            <person name="Tanigami A."/>
            <person name="Fujiwara T."/>
            <person name="Ono T."/>
            <person name="Yamada K."/>
            <person name="Fujii Y."/>
            <person name="Ozaki K."/>
            <person name="Hirao M."/>
            <person name="Ohmori Y."/>
            <person name="Kawabata A."/>
            <person name="Hikiji T."/>
            <person name="Kobatake N."/>
            <person name="Inagaki H."/>
            <person name="Ikema Y."/>
            <person name="Okamoto S."/>
            <person name="Okitani R."/>
            <person name="Kawakami T."/>
            <person name="Noguchi S."/>
            <person name="Itoh T."/>
            <person name="Shigeta K."/>
            <person name="Senba T."/>
            <person name="Matsumura K."/>
            <person name="Nakajima Y."/>
            <person name="Mizuno T."/>
            <person name="Morinaga M."/>
            <person name="Sasaki M."/>
            <person name="Togashi T."/>
            <person name="Oyama M."/>
            <person name="Hata H."/>
            <person name="Watanabe M."/>
            <person name="Komatsu T."/>
            <person name="Mizushima-Sugano J."/>
            <person name="Satoh T."/>
            <person name="Shirai Y."/>
            <person name="Takahashi Y."/>
            <person name="Nakagawa K."/>
            <person name="Okumura K."/>
            <person name="Nagase T."/>
            <person name="Nomura N."/>
            <person name="Kikuchi H."/>
            <person name="Masuho Y."/>
            <person name="Yamashita R."/>
            <person name="Nakai K."/>
            <person name="Yada T."/>
            <person name="Nakamura Y."/>
            <person name="Ohara O."/>
            <person name="Isogai T."/>
            <person name="Sugano S."/>
        </authorList>
    </citation>
    <scope>NUCLEOTIDE SEQUENCE [LARGE SCALE MRNA] (ISOFORMS 1; 3 AND 4)</scope>
    <source>
        <tissue>Brain</tissue>
        <tissue>Pericardium</tissue>
        <tissue>Placenta</tissue>
    </source>
</reference>
<reference key="4">
    <citation type="journal article" date="2004" name="Proc. Natl. Acad. Sci. U.S.A.">
        <title>Large-scale cDNA transfection screening for genes related to cancer development and progression.</title>
        <authorList>
            <person name="Wan D."/>
            <person name="Gong Y."/>
            <person name="Qin W."/>
            <person name="Zhang P."/>
            <person name="Li J."/>
            <person name="Wei L."/>
            <person name="Zhou X."/>
            <person name="Li H."/>
            <person name="Qiu X."/>
            <person name="Zhong F."/>
            <person name="He L."/>
            <person name="Yu J."/>
            <person name="Yao G."/>
            <person name="Jiang H."/>
            <person name="Qian L."/>
            <person name="Yu Y."/>
            <person name="Shu H."/>
            <person name="Chen X."/>
            <person name="Xu H."/>
            <person name="Guo M."/>
            <person name="Pan Z."/>
            <person name="Chen Y."/>
            <person name="Ge C."/>
            <person name="Yang S."/>
            <person name="Gu J."/>
        </authorList>
    </citation>
    <scope>NUCLEOTIDE SEQUENCE [LARGE SCALE MRNA] (ISOFORM 1)</scope>
</reference>
<reference key="5">
    <citation type="journal article" date="2005" name="Nature">
        <title>Generation and annotation of the DNA sequences of human chromosomes 2 and 4.</title>
        <authorList>
            <person name="Hillier L.W."/>
            <person name="Graves T.A."/>
            <person name="Fulton R.S."/>
            <person name="Fulton L.A."/>
            <person name="Pepin K.H."/>
            <person name="Minx P."/>
            <person name="Wagner-McPherson C."/>
            <person name="Layman D."/>
            <person name="Wylie K."/>
            <person name="Sekhon M."/>
            <person name="Becker M.C."/>
            <person name="Fewell G.A."/>
            <person name="Delehaunty K.D."/>
            <person name="Miner T.L."/>
            <person name="Nash W.E."/>
            <person name="Kremitzki C."/>
            <person name="Oddy L."/>
            <person name="Du H."/>
            <person name="Sun H."/>
            <person name="Bradshaw-Cordum H."/>
            <person name="Ali J."/>
            <person name="Carter J."/>
            <person name="Cordes M."/>
            <person name="Harris A."/>
            <person name="Isak A."/>
            <person name="van Brunt A."/>
            <person name="Nguyen C."/>
            <person name="Du F."/>
            <person name="Courtney L."/>
            <person name="Kalicki J."/>
            <person name="Ozersky P."/>
            <person name="Abbott S."/>
            <person name="Armstrong J."/>
            <person name="Belter E.A."/>
            <person name="Caruso L."/>
            <person name="Cedroni M."/>
            <person name="Cotton M."/>
            <person name="Davidson T."/>
            <person name="Desai A."/>
            <person name="Elliott G."/>
            <person name="Erb T."/>
            <person name="Fronick C."/>
            <person name="Gaige T."/>
            <person name="Haakenson W."/>
            <person name="Haglund K."/>
            <person name="Holmes A."/>
            <person name="Harkins R."/>
            <person name="Kim K."/>
            <person name="Kruchowski S.S."/>
            <person name="Strong C.M."/>
            <person name="Grewal N."/>
            <person name="Goyea E."/>
            <person name="Hou S."/>
            <person name="Levy A."/>
            <person name="Martinka S."/>
            <person name="Mead K."/>
            <person name="McLellan M.D."/>
            <person name="Meyer R."/>
            <person name="Randall-Maher J."/>
            <person name="Tomlinson C."/>
            <person name="Dauphin-Kohlberg S."/>
            <person name="Kozlowicz-Reilly A."/>
            <person name="Shah N."/>
            <person name="Swearengen-Shahid S."/>
            <person name="Snider J."/>
            <person name="Strong J.T."/>
            <person name="Thompson J."/>
            <person name="Yoakum M."/>
            <person name="Leonard S."/>
            <person name="Pearman C."/>
            <person name="Trani L."/>
            <person name="Radionenko M."/>
            <person name="Waligorski J.E."/>
            <person name="Wang C."/>
            <person name="Rock S.M."/>
            <person name="Tin-Wollam A.-M."/>
            <person name="Maupin R."/>
            <person name="Latreille P."/>
            <person name="Wendl M.C."/>
            <person name="Yang S.-P."/>
            <person name="Pohl C."/>
            <person name="Wallis J.W."/>
            <person name="Spieth J."/>
            <person name="Bieri T.A."/>
            <person name="Berkowicz N."/>
            <person name="Nelson J.O."/>
            <person name="Osborne J."/>
            <person name="Ding L."/>
            <person name="Meyer R."/>
            <person name="Sabo A."/>
            <person name="Shotland Y."/>
            <person name="Sinha P."/>
            <person name="Wohldmann P.E."/>
            <person name="Cook L.L."/>
            <person name="Hickenbotham M.T."/>
            <person name="Eldred J."/>
            <person name="Williams D."/>
            <person name="Jones T.A."/>
            <person name="She X."/>
            <person name="Ciccarelli F.D."/>
            <person name="Izaurralde E."/>
            <person name="Taylor J."/>
            <person name="Schmutz J."/>
            <person name="Myers R.M."/>
            <person name="Cox D.R."/>
            <person name="Huang X."/>
            <person name="McPherson J.D."/>
            <person name="Mardis E.R."/>
            <person name="Clifton S.W."/>
            <person name="Warren W.C."/>
            <person name="Chinwalla A.T."/>
            <person name="Eddy S.R."/>
            <person name="Marra M.A."/>
            <person name="Ovcharenko I."/>
            <person name="Furey T.S."/>
            <person name="Miller W."/>
            <person name="Eichler E.E."/>
            <person name="Bork P."/>
            <person name="Suyama M."/>
            <person name="Torrents D."/>
            <person name="Waterston R.H."/>
            <person name="Wilson R.K."/>
        </authorList>
    </citation>
    <scope>NUCLEOTIDE SEQUENCE [LARGE SCALE GENOMIC DNA]</scope>
</reference>
<reference key="6">
    <citation type="submission" date="2005-07" db="EMBL/GenBank/DDBJ databases">
        <authorList>
            <person name="Mural R.J."/>
            <person name="Istrail S."/>
            <person name="Sutton G.G."/>
            <person name="Florea L."/>
            <person name="Halpern A.L."/>
            <person name="Mobarry C.M."/>
            <person name="Lippert R."/>
            <person name="Walenz B."/>
            <person name="Shatkay H."/>
            <person name="Dew I."/>
            <person name="Miller J.R."/>
            <person name="Flanigan M.J."/>
            <person name="Edwards N.J."/>
            <person name="Bolanos R."/>
            <person name="Fasulo D."/>
            <person name="Halldorsson B.V."/>
            <person name="Hannenhalli S."/>
            <person name="Turner R."/>
            <person name="Yooseph S."/>
            <person name="Lu F."/>
            <person name="Nusskern D.R."/>
            <person name="Shue B.C."/>
            <person name="Zheng X.H."/>
            <person name="Zhong F."/>
            <person name="Delcher A.L."/>
            <person name="Huson D.H."/>
            <person name="Kravitz S.A."/>
            <person name="Mouchard L."/>
            <person name="Reinert K."/>
            <person name="Remington K.A."/>
            <person name="Clark A.G."/>
            <person name="Waterman M.S."/>
            <person name="Eichler E.E."/>
            <person name="Adams M.D."/>
            <person name="Hunkapiller M.W."/>
            <person name="Myers E.W."/>
            <person name="Venter J.C."/>
        </authorList>
    </citation>
    <scope>NUCLEOTIDE SEQUENCE [LARGE SCALE GENOMIC DNA]</scope>
</reference>
<reference key="7">
    <citation type="journal article" date="2004" name="Genome Res.">
        <title>The status, quality, and expansion of the NIH full-length cDNA project: the Mammalian Gene Collection (MGC).</title>
        <authorList>
            <consortium name="The MGC Project Team"/>
        </authorList>
    </citation>
    <scope>NUCLEOTIDE SEQUENCE [LARGE SCALE MRNA] (ISOFORM 2)</scope>
    <source>
        <tissue>Eye</tissue>
    </source>
</reference>
<reference key="8">
    <citation type="journal article" date="2008" name="PLoS ONE">
        <title>SGNP: an essential stress granule/nucleolar protein potentially involved in 5.8s rRNA processing/transport.</title>
        <authorList>
            <person name="Zhu C.H."/>
            <person name="Kim J."/>
            <person name="Shay J.W."/>
            <person name="Wright W.E."/>
        </authorList>
    </citation>
    <scope>SUBCELLULAR LOCATION</scope>
</reference>
<reference key="9">
    <citation type="journal article" date="2008" name="Proc. Natl. Acad. Sci. U.S.A.">
        <title>A quantitative atlas of mitotic phosphorylation.</title>
        <authorList>
            <person name="Dephoure N."/>
            <person name="Zhou C."/>
            <person name="Villen J."/>
            <person name="Beausoleil S.A."/>
            <person name="Bakalarski C.E."/>
            <person name="Elledge S.J."/>
            <person name="Gygi S.P."/>
        </authorList>
    </citation>
    <scope>PHOSPHORYLATION [LARGE SCALE ANALYSIS] AT SER-120</scope>
    <scope>IDENTIFICATION BY MASS SPECTROMETRY [LARGE SCALE ANALYSIS]</scope>
    <source>
        <tissue>Cervix carcinoma</tissue>
    </source>
</reference>
<reference key="10">
    <citation type="journal article" date="2009" name="Anal. Chem.">
        <title>Lys-N and trypsin cover complementary parts of the phosphoproteome in a refined SCX-based approach.</title>
        <authorList>
            <person name="Gauci S."/>
            <person name="Helbig A.O."/>
            <person name="Slijper M."/>
            <person name="Krijgsveld J."/>
            <person name="Heck A.J."/>
            <person name="Mohammed S."/>
        </authorList>
    </citation>
    <scope>ACETYLATION [LARGE SCALE ANALYSIS] AT ALA-2</scope>
    <scope>CLEAVAGE OF INITIATOR METHIONINE [LARGE SCALE ANALYSIS]</scope>
    <scope>IDENTIFICATION BY MASS SPECTROMETRY [LARGE SCALE ANALYSIS]</scope>
</reference>
<reference key="11">
    <citation type="journal article" date="2011" name="BMC Syst. Biol.">
        <title>Initial characterization of the human central proteome.</title>
        <authorList>
            <person name="Burkard T.R."/>
            <person name="Planyavsky M."/>
            <person name="Kaupe I."/>
            <person name="Breitwieser F.P."/>
            <person name="Buerckstuemmer T."/>
            <person name="Bennett K.L."/>
            <person name="Superti-Furga G."/>
            <person name="Colinge J."/>
        </authorList>
    </citation>
    <scope>IDENTIFICATION BY MASS SPECTROMETRY [LARGE SCALE ANALYSIS]</scope>
</reference>
<reference key="12">
    <citation type="journal article" date="2013" name="J. Proteome Res.">
        <title>Toward a comprehensive characterization of a human cancer cell phosphoproteome.</title>
        <authorList>
            <person name="Zhou H."/>
            <person name="Di Palma S."/>
            <person name="Preisinger C."/>
            <person name="Peng M."/>
            <person name="Polat A.N."/>
            <person name="Heck A.J."/>
            <person name="Mohammed S."/>
        </authorList>
    </citation>
    <scope>PHOSPHORYLATION [LARGE SCALE ANALYSIS] AT SER-120 AND SER-455</scope>
    <scope>IDENTIFICATION BY MASS SPECTROMETRY [LARGE SCALE ANALYSIS]</scope>
    <source>
        <tissue>Cervix carcinoma</tissue>
        <tissue>Erythroleukemia</tissue>
    </source>
</reference>
<reference key="13">
    <citation type="journal article" date="2014" name="J. Proteomics">
        <title>An enzyme assisted RP-RPLC approach for in-depth analysis of human liver phosphoproteome.</title>
        <authorList>
            <person name="Bian Y."/>
            <person name="Song C."/>
            <person name="Cheng K."/>
            <person name="Dong M."/>
            <person name="Wang F."/>
            <person name="Huang J."/>
            <person name="Sun D."/>
            <person name="Wang L."/>
            <person name="Ye M."/>
            <person name="Zou H."/>
        </authorList>
    </citation>
    <scope>PHOSPHORYLATION [LARGE SCALE ANALYSIS] AT SER-120</scope>
    <scope>IDENTIFICATION BY MASS SPECTROMETRY [LARGE SCALE ANALYSIS]</scope>
    <source>
        <tissue>Liver</tissue>
    </source>
</reference>
<accession>Q9NUQ6</accession>
<accession>A8K381</accession>
<accession>B4DRE6</accession>
<accession>B4DT67</accession>
<accession>B7WNZ7</accession>
<accession>Q53T22</accession>
<accession>Q8WV53</accession>
<accession>Q8WYG1</accession>
<accession>Q9NTW4</accession>
<name>SPS2L_HUMAN</name>
<keyword id="KW-0007">Acetylation</keyword>
<keyword id="KW-0025">Alternative splicing</keyword>
<keyword id="KW-0175">Coiled coil</keyword>
<keyword id="KW-0963">Cytoplasm</keyword>
<keyword id="KW-0539">Nucleus</keyword>
<keyword id="KW-0597">Phosphoprotein</keyword>
<keyword id="KW-1267">Proteomics identification</keyword>
<keyword id="KW-1185">Reference proteome</keyword>
<gene>
    <name type="primary">SPATS2L</name>
    <name type="synonym">DNAPTP6</name>
    <name type="ORF">SP1224</name>
</gene>
<proteinExistence type="evidence at protein level"/>
<protein>
    <recommendedName>
        <fullName>SPATS2-like protein</fullName>
    </recommendedName>
    <alternativeName>
        <fullName>DNA polymerase-transactivated protein 6</fullName>
    </alternativeName>
    <alternativeName>
        <fullName>Stress granule and nucleolar protein</fullName>
        <shortName>SGNP</shortName>
    </alternativeName>
</protein>